<comment type="function">
    <text evidence="1">Catalyzes the conversion of N5-carboxyaminoimidazole ribonucleotide (N5-CAIR) to 4-carboxy-5-aminoimidazole ribonucleotide (CAIR).</text>
</comment>
<comment type="catalytic activity">
    <reaction evidence="1">
        <text>5-carboxyamino-1-(5-phospho-D-ribosyl)imidazole + H(+) = 5-amino-1-(5-phospho-D-ribosyl)imidazole-4-carboxylate</text>
        <dbReference type="Rhea" id="RHEA:13193"/>
        <dbReference type="ChEBI" id="CHEBI:15378"/>
        <dbReference type="ChEBI" id="CHEBI:58730"/>
        <dbReference type="ChEBI" id="CHEBI:77657"/>
        <dbReference type="EC" id="5.4.99.18"/>
    </reaction>
</comment>
<comment type="pathway">
    <text evidence="1">Purine metabolism; IMP biosynthesis via de novo pathway; 5-amino-1-(5-phospho-D-ribosyl)imidazole-4-carboxylate from 5-amino-1-(5-phospho-D-ribosyl)imidazole (N5-CAIR route): step 2/2.</text>
</comment>
<comment type="similarity">
    <text evidence="1">Belongs to the AIR carboxylase family. Class I subfamily.</text>
</comment>
<proteinExistence type="evidence at protein level"/>
<evidence type="ECO:0000255" key="1">
    <source>
        <dbReference type="HAMAP-Rule" id="MF_01929"/>
    </source>
</evidence>
<evidence type="ECO:0007829" key="2">
    <source>
        <dbReference type="PDB" id="1O4V"/>
    </source>
</evidence>
<gene>
    <name evidence="1" type="primary">purE</name>
    <name type="ordered locus">TM_0446</name>
</gene>
<keyword id="KW-0002">3D-structure</keyword>
<keyword id="KW-0413">Isomerase</keyword>
<keyword id="KW-0658">Purine biosynthesis</keyword>
<keyword id="KW-1185">Reference proteome</keyword>
<feature type="chain" id="PRO_0000074980" description="N5-carboxyaminoimidazole ribonucleotide mutase">
    <location>
        <begin position="1"/>
        <end position="171"/>
    </location>
</feature>
<feature type="binding site" evidence="1">
    <location>
        <position position="10"/>
    </location>
    <ligand>
        <name>substrate</name>
    </ligand>
</feature>
<feature type="binding site" evidence="1">
    <location>
        <position position="13"/>
    </location>
    <ligand>
        <name>substrate</name>
    </ligand>
</feature>
<feature type="binding site" evidence="1">
    <location>
        <position position="40"/>
    </location>
    <ligand>
        <name>substrate</name>
    </ligand>
</feature>
<feature type="strand" evidence="2">
    <location>
        <begin position="3"/>
        <end position="9"/>
    </location>
</feature>
<feature type="helix" evidence="2">
    <location>
        <begin position="11"/>
        <end position="13"/>
    </location>
</feature>
<feature type="helix" evidence="2">
    <location>
        <begin position="14"/>
        <end position="26"/>
    </location>
</feature>
<feature type="strand" evidence="2">
    <location>
        <begin position="30"/>
        <end position="35"/>
    </location>
</feature>
<feature type="turn" evidence="2">
    <location>
        <begin position="38"/>
        <end position="40"/>
    </location>
</feature>
<feature type="helix" evidence="2">
    <location>
        <begin position="42"/>
        <end position="51"/>
    </location>
</feature>
<feature type="turn" evidence="2">
    <location>
        <begin position="52"/>
        <end position="56"/>
    </location>
</feature>
<feature type="strand" evidence="2">
    <location>
        <begin position="59"/>
        <end position="67"/>
    </location>
</feature>
<feature type="helix" evidence="2">
    <location>
        <begin position="70"/>
        <end position="77"/>
    </location>
</feature>
<feature type="strand" evidence="2">
    <location>
        <begin position="82"/>
        <end position="87"/>
    </location>
</feature>
<feature type="turn" evidence="2">
    <location>
        <begin position="90"/>
        <end position="94"/>
    </location>
</feature>
<feature type="helix" evidence="2">
    <location>
        <begin position="95"/>
        <end position="102"/>
    </location>
</feature>
<feature type="helix" evidence="2">
    <location>
        <begin position="118"/>
        <end position="130"/>
    </location>
</feature>
<feature type="helix" evidence="2">
    <location>
        <begin position="134"/>
        <end position="169"/>
    </location>
</feature>
<reference key="1">
    <citation type="journal article" date="1999" name="Nature">
        <title>Evidence for lateral gene transfer between Archaea and Bacteria from genome sequence of Thermotoga maritima.</title>
        <authorList>
            <person name="Nelson K.E."/>
            <person name="Clayton R.A."/>
            <person name="Gill S.R."/>
            <person name="Gwinn M.L."/>
            <person name="Dodson R.J."/>
            <person name="Haft D.H."/>
            <person name="Hickey E.K."/>
            <person name="Peterson J.D."/>
            <person name="Nelson W.C."/>
            <person name="Ketchum K.A."/>
            <person name="McDonald L.A."/>
            <person name="Utterback T.R."/>
            <person name="Malek J.A."/>
            <person name="Linher K.D."/>
            <person name="Garrett M.M."/>
            <person name="Stewart A.M."/>
            <person name="Cotton M.D."/>
            <person name="Pratt M.S."/>
            <person name="Phillips C.A."/>
            <person name="Richardson D.L."/>
            <person name="Heidelberg J.F."/>
            <person name="Sutton G.G."/>
            <person name="Fleischmann R.D."/>
            <person name="Eisen J.A."/>
            <person name="White O."/>
            <person name="Salzberg S.L."/>
            <person name="Smith H.O."/>
            <person name="Venter J.C."/>
            <person name="Fraser C.M."/>
        </authorList>
    </citation>
    <scope>NUCLEOTIDE SEQUENCE [LARGE SCALE GENOMIC DNA]</scope>
    <source>
        <strain>ATCC 43589 / DSM 3109 / JCM 10099 / NBRC 100826 / MSB8</strain>
    </source>
</reference>
<reference key="2">
    <citation type="journal article" date="2004" name="Proteins">
        <title>Crystal structure of a phosphoribosylaminoimidazole mutase PurE (TM0446) from Thermotoga maritima at 1.77-A resolution.</title>
        <authorList>
            <person name="Schwarzenbacher R."/>
            <person name="Jaroszewski L."/>
            <person name="von Delft F."/>
            <person name="Abdubek P."/>
            <person name="Ambing E."/>
            <person name="Biorac T."/>
            <person name="Brinen L.S."/>
            <person name="Canaves J.M."/>
            <person name="Cambell J."/>
            <person name="Chiu H.-J."/>
            <person name="Dai X."/>
            <person name="Deacon A.M."/>
            <person name="DiDonato M."/>
            <person name="Elsliger M.-A."/>
            <person name="Eshagi S."/>
            <person name="Floyd R."/>
            <person name="Godzik A."/>
            <person name="Grittini C."/>
            <person name="Grzechnik S.K."/>
            <person name="Hampton E."/>
            <person name="Karlak C."/>
            <person name="Klock H.E."/>
            <person name="Koesema E."/>
            <person name="Kovarik J.S."/>
            <person name="Kreusch A."/>
            <person name="Kuhn P."/>
            <person name="Lesley S.A."/>
            <person name="Levin I."/>
            <person name="McMullan D."/>
            <person name="McPhillips T.M."/>
            <person name="Miller M.D."/>
            <person name="Morse A."/>
            <person name="Moy K."/>
            <person name="Ouyang J."/>
            <person name="Page R."/>
            <person name="Quijano K."/>
            <person name="Robb A."/>
            <person name="Spraggon G."/>
            <person name="Stevens R.C."/>
            <person name="van den Bedem H."/>
            <person name="Velasquez J."/>
            <person name="Vincent J."/>
            <person name="Wang X."/>
            <person name="West B."/>
            <person name="Wolf G."/>
            <person name="Xu Q."/>
            <person name="Hodgson K.O."/>
            <person name="Wooley J."/>
            <person name="Wilson I.A."/>
        </authorList>
    </citation>
    <scope>X-RAY CRYSTALLOGRAPHY (1.77 ANGSTROMS) OF 2-171</scope>
    <scope>SUBUNIT</scope>
</reference>
<protein>
    <recommendedName>
        <fullName evidence="1">N5-carboxyaminoimidazole ribonucleotide mutase</fullName>
        <shortName evidence="1">N5-CAIR mutase</shortName>
        <ecNumber evidence="1">5.4.99.18</ecNumber>
    </recommendedName>
    <alternativeName>
        <fullName evidence="1">5-(carboxyamino)imidazole ribonucleotide mutase</fullName>
    </alternativeName>
</protein>
<name>PURE_THEMA</name>
<organism>
    <name type="scientific">Thermotoga maritima (strain ATCC 43589 / DSM 3109 / JCM 10099 / NBRC 100826 / MSB8)</name>
    <dbReference type="NCBI Taxonomy" id="243274"/>
    <lineage>
        <taxon>Bacteria</taxon>
        <taxon>Thermotogati</taxon>
        <taxon>Thermotogota</taxon>
        <taxon>Thermotogae</taxon>
        <taxon>Thermotogales</taxon>
        <taxon>Thermotogaceae</taxon>
        <taxon>Thermotoga</taxon>
    </lineage>
</organism>
<dbReference type="EC" id="5.4.99.18" evidence="1"/>
<dbReference type="EMBL" id="AE000512">
    <property type="protein sequence ID" value="AAD35541.1"/>
    <property type="molecule type" value="Genomic_DNA"/>
</dbReference>
<dbReference type="PIR" id="G72374">
    <property type="entry name" value="G72374"/>
</dbReference>
<dbReference type="RefSeq" id="NP_228256.1">
    <property type="nucleotide sequence ID" value="NC_000853.1"/>
</dbReference>
<dbReference type="RefSeq" id="WP_004081520.1">
    <property type="nucleotide sequence ID" value="NZ_CP011107.1"/>
</dbReference>
<dbReference type="PDB" id="1O4V">
    <property type="method" value="X-ray"/>
    <property type="resolution" value="1.77 A"/>
    <property type="chains" value="A=2-171"/>
</dbReference>
<dbReference type="PDBsum" id="1O4V"/>
<dbReference type="SMR" id="Q9WYS7"/>
<dbReference type="FunCoup" id="Q9WYS7">
    <property type="interactions" value="279"/>
</dbReference>
<dbReference type="STRING" id="243274.TM_0446"/>
<dbReference type="PaxDb" id="243274-THEMA_02495"/>
<dbReference type="EnsemblBacteria" id="AAD35541">
    <property type="protein sequence ID" value="AAD35541"/>
    <property type="gene ID" value="TM_0446"/>
</dbReference>
<dbReference type="KEGG" id="tma:TM0446"/>
<dbReference type="KEGG" id="tmi:THEMA_02495"/>
<dbReference type="KEGG" id="tmm:Tmari_0443"/>
<dbReference type="KEGG" id="tmw:THMA_0452"/>
<dbReference type="eggNOG" id="COG0041">
    <property type="taxonomic scope" value="Bacteria"/>
</dbReference>
<dbReference type="InParanoid" id="Q9WYS7"/>
<dbReference type="OrthoDB" id="9791908at2"/>
<dbReference type="UniPathway" id="UPA00074">
    <property type="reaction ID" value="UER00943"/>
</dbReference>
<dbReference type="EvolutionaryTrace" id="Q9WYS7"/>
<dbReference type="Proteomes" id="UP000008183">
    <property type="component" value="Chromosome"/>
</dbReference>
<dbReference type="GO" id="GO:0034023">
    <property type="term" value="F:5-(carboxyamino)imidazole ribonucleotide mutase activity"/>
    <property type="evidence" value="ECO:0007669"/>
    <property type="project" value="UniProtKB-UniRule"/>
</dbReference>
<dbReference type="GO" id="GO:0006189">
    <property type="term" value="P:'de novo' IMP biosynthetic process"/>
    <property type="evidence" value="ECO:0007669"/>
    <property type="project" value="UniProtKB-UniRule"/>
</dbReference>
<dbReference type="FunFam" id="3.40.50.1970:FF:000013">
    <property type="entry name" value="Phosphoribosylaminoimidazole carboxylase"/>
    <property type="match status" value="1"/>
</dbReference>
<dbReference type="Gene3D" id="3.40.50.1970">
    <property type="match status" value="1"/>
</dbReference>
<dbReference type="HAMAP" id="MF_01929">
    <property type="entry name" value="PurE_classI"/>
    <property type="match status" value="1"/>
</dbReference>
<dbReference type="InterPro" id="IPR033747">
    <property type="entry name" value="PurE_ClassI"/>
</dbReference>
<dbReference type="InterPro" id="IPR000031">
    <property type="entry name" value="PurE_dom"/>
</dbReference>
<dbReference type="InterPro" id="IPR024694">
    <property type="entry name" value="PurE_prokaryotes"/>
</dbReference>
<dbReference type="NCBIfam" id="TIGR01162">
    <property type="entry name" value="purE"/>
    <property type="match status" value="1"/>
</dbReference>
<dbReference type="PANTHER" id="PTHR23046:SF2">
    <property type="entry name" value="PHOSPHORIBOSYLAMINOIMIDAZOLE CARBOXYLASE"/>
    <property type="match status" value="1"/>
</dbReference>
<dbReference type="PANTHER" id="PTHR23046">
    <property type="entry name" value="PHOSPHORIBOSYLAMINOIMIDAZOLE CARBOXYLASE CATALYTIC SUBUNIT"/>
    <property type="match status" value="1"/>
</dbReference>
<dbReference type="Pfam" id="PF00731">
    <property type="entry name" value="AIRC"/>
    <property type="match status" value="1"/>
</dbReference>
<dbReference type="PIRSF" id="PIRSF001338">
    <property type="entry name" value="AIR_carboxylase"/>
    <property type="match status" value="1"/>
</dbReference>
<dbReference type="SMART" id="SM01001">
    <property type="entry name" value="AIRC"/>
    <property type="match status" value="1"/>
</dbReference>
<dbReference type="SUPFAM" id="SSF52255">
    <property type="entry name" value="N5-CAIR mutase (phosphoribosylaminoimidazole carboxylase, PurE)"/>
    <property type="match status" value="1"/>
</dbReference>
<accession>Q9WYS7</accession>
<sequence length="171" mass="18618">MPRVGIIMGSDSDLPVMKQAAEILEEFGIDYEITIVSAHRTPDRMFEYAKNAEERGIEVIIAGAGGAAHLPGMVASITHLPVIGVPVKTSTLNGLDSLFSIVQMPGGVPVATVAINNAKNAGILAASILGIKYPEIARKVKEYKERMKREVLEKAQRLEQIGYKEYLNQKE</sequence>